<comment type="function">
    <text evidence="1">Probably deamidates glutamine residues to glutamate on methyl-accepting chemotaxis receptors (MCPs), playing an important role in chemotaxis.</text>
</comment>
<comment type="catalytic activity">
    <reaction evidence="1">
        <text>L-glutaminyl-[protein] + H2O = L-glutamyl-[protein] + NH4(+)</text>
        <dbReference type="Rhea" id="RHEA:16441"/>
        <dbReference type="Rhea" id="RHEA-COMP:10207"/>
        <dbReference type="Rhea" id="RHEA-COMP:10208"/>
        <dbReference type="ChEBI" id="CHEBI:15377"/>
        <dbReference type="ChEBI" id="CHEBI:28938"/>
        <dbReference type="ChEBI" id="CHEBI:29973"/>
        <dbReference type="ChEBI" id="CHEBI:30011"/>
        <dbReference type="EC" id="3.5.1.44"/>
    </reaction>
</comment>
<comment type="similarity">
    <text evidence="1">Belongs to the CheD family.</text>
</comment>
<sequence>MSDLILGIGEYGVSKTPGSMVKTYALGSCVAVTMYEPNLKIAGMVHVALPESKLNTAKGEQCPGYFADLGVPLLFKEMVRLGCHARGRGLVVKMLGGAAVMAGNDTFNIGKRNILAVKKILWKLGMGPVAEDVGANYSRTVSLHVDTGLVNVSCPGRGQWQI</sequence>
<reference key="1">
    <citation type="submission" date="2005-10" db="EMBL/GenBank/DDBJ databases">
        <title>Complete sequence of Pelobacter carbinolicus DSM 2380.</title>
        <authorList>
            <person name="Copeland A."/>
            <person name="Lucas S."/>
            <person name="Lapidus A."/>
            <person name="Barry K."/>
            <person name="Detter J.C."/>
            <person name="Glavina T."/>
            <person name="Hammon N."/>
            <person name="Israni S."/>
            <person name="Pitluck S."/>
            <person name="Chertkov O."/>
            <person name="Schmutz J."/>
            <person name="Larimer F."/>
            <person name="Land M."/>
            <person name="Kyrpides N."/>
            <person name="Ivanova N."/>
            <person name="Richardson P."/>
        </authorList>
    </citation>
    <scope>NUCLEOTIDE SEQUENCE [LARGE SCALE GENOMIC DNA]</scope>
    <source>
        <strain>DSM 2380 / NBRC 103641 / GraBd1</strain>
    </source>
</reference>
<protein>
    <recommendedName>
        <fullName evidence="1">Probable chemoreceptor glutamine deamidase CheD</fullName>
        <ecNumber evidence="1">3.5.1.44</ecNumber>
    </recommendedName>
</protein>
<name>CHED_SYNC1</name>
<evidence type="ECO:0000255" key="1">
    <source>
        <dbReference type="HAMAP-Rule" id="MF_01440"/>
    </source>
</evidence>
<feature type="chain" id="PRO_0000251048" description="Probable chemoreceptor glutamine deamidase CheD">
    <location>
        <begin position="1"/>
        <end position="162"/>
    </location>
</feature>
<accession>Q3A5A7</accession>
<organism>
    <name type="scientific">Syntrophotalea carbinolica (strain DSM 2380 / NBRC 103641 / GraBd1)</name>
    <name type="common">Pelobacter carbinolicus</name>
    <dbReference type="NCBI Taxonomy" id="338963"/>
    <lineage>
        <taxon>Bacteria</taxon>
        <taxon>Pseudomonadati</taxon>
        <taxon>Thermodesulfobacteriota</taxon>
        <taxon>Desulfuromonadia</taxon>
        <taxon>Desulfuromonadales</taxon>
        <taxon>Syntrophotaleaceae</taxon>
        <taxon>Syntrophotalea</taxon>
    </lineage>
</organism>
<dbReference type="EC" id="3.5.1.44" evidence="1"/>
<dbReference type="EMBL" id="CP000142">
    <property type="protein sequence ID" value="ABA88450.1"/>
    <property type="molecule type" value="Genomic_DNA"/>
</dbReference>
<dbReference type="RefSeq" id="WP_011340924.1">
    <property type="nucleotide sequence ID" value="NC_007498.2"/>
</dbReference>
<dbReference type="SMR" id="Q3A5A7"/>
<dbReference type="STRING" id="338963.Pcar_1201"/>
<dbReference type="KEGG" id="pca:Pcar_1201"/>
<dbReference type="eggNOG" id="COG1871">
    <property type="taxonomic scope" value="Bacteria"/>
</dbReference>
<dbReference type="HOGENOM" id="CLU_087854_2_0_7"/>
<dbReference type="OrthoDB" id="9807202at2"/>
<dbReference type="Proteomes" id="UP000002534">
    <property type="component" value="Chromosome"/>
</dbReference>
<dbReference type="GO" id="GO:0050568">
    <property type="term" value="F:protein-glutamine glutaminase activity"/>
    <property type="evidence" value="ECO:0007669"/>
    <property type="project" value="UniProtKB-UniRule"/>
</dbReference>
<dbReference type="GO" id="GO:0006935">
    <property type="term" value="P:chemotaxis"/>
    <property type="evidence" value="ECO:0007669"/>
    <property type="project" value="UniProtKB-UniRule"/>
</dbReference>
<dbReference type="CDD" id="cd16352">
    <property type="entry name" value="CheD"/>
    <property type="match status" value="1"/>
</dbReference>
<dbReference type="Gene3D" id="3.30.1330.200">
    <property type="match status" value="1"/>
</dbReference>
<dbReference type="HAMAP" id="MF_01440">
    <property type="entry name" value="CheD"/>
    <property type="match status" value="1"/>
</dbReference>
<dbReference type="InterPro" id="IPR038592">
    <property type="entry name" value="CheD-like_sf"/>
</dbReference>
<dbReference type="InterPro" id="IPR005659">
    <property type="entry name" value="Chemorcpt_Glu_NH3ase_CheD"/>
</dbReference>
<dbReference type="InterPro" id="IPR011324">
    <property type="entry name" value="Cytotoxic_necrot_fac-like_cat"/>
</dbReference>
<dbReference type="PANTHER" id="PTHR35147">
    <property type="entry name" value="CHEMORECEPTOR GLUTAMINE DEAMIDASE CHED-RELATED"/>
    <property type="match status" value="1"/>
</dbReference>
<dbReference type="PANTHER" id="PTHR35147:SF1">
    <property type="entry name" value="CHEMORECEPTOR GLUTAMINE DEAMIDASE CHED-RELATED"/>
    <property type="match status" value="1"/>
</dbReference>
<dbReference type="Pfam" id="PF03975">
    <property type="entry name" value="CheD"/>
    <property type="match status" value="1"/>
</dbReference>
<dbReference type="SUPFAM" id="SSF64438">
    <property type="entry name" value="CNF1/YfiH-like putative cysteine hydrolases"/>
    <property type="match status" value="1"/>
</dbReference>
<keyword id="KW-0145">Chemotaxis</keyword>
<keyword id="KW-0378">Hydrolase</keyword>
<keyword id="KW-1185">Reference proteome</keyword>
<gene>
    <name evidence="1" type="primary">cheD</name>
    <name type="ordered locus">Pcar_1201</name>
</gene>
<proteinExistence type="inferred from homology"/>